<name>Y3621_HALWD</name>
<sequence>MHIPDGFLDPLVAGLFWLGSAVTIGLAVRHARSELGDERTPLLGVVAAGIFAAQMLNWPIPGGTSAHFVGGAFAGILLGPSLGVLAMTAVVTIQALVFGDGGIIALGGNLFAIAVVNVLIGYGLFRMFREIHESGAAFIAGWAAVTLSALIVALGVGFSSAFAYEIGTTVTIMTGGHAVLGIIEGAITAGVYTYIAAARPDLVFTQFENSNLSPDVKL</sequence>
<comment type="function">
    <text>May be involved in metal transport.</text>
</comment>
<comment type="subcellular location">
    <subcellularLocation>
        <location evidence="2">Cell membrane</location>
        <topology evidence="2">Multi-pass membrane protein</topology>
    </subcellularLocation>
</comment>
<comment type="similarity">
    <text evidence="2">Belongs to the CbiM family. NikM subfamily.</text>
</comment>
<organism>
    <name type="scientific">Haloquadratum walsbyi (strain DSM 16790 / HBSQ001)</name>
    <dbReference type="NCBI Taxonomy" id="362976"/>
    <lineage>
        <taxon>Archaea</taxon>
        <taxon>Methanobacteriati</taxon>
        <taxon>Methanobacteriota</taxon>
        <taxon>Stenosarchaea group</taxon>
        <taxon>Halobacteria</taxon>
        <taxon>Halobacteriales</taxon>
        <taxon>Haloferacaceae</taxon>
        <taxon>Haloquadratum</taxon>
    </lineage>
</organism>
<keyword id="KW-1003">Cell membrane</keyword>
<keyword id="KW-0472">Membrane</keyword>
<keyword id="KW-1185">Reference proteome</keyword>
<keyword id="KW-0812">Transmembrane</keyword>
<keyword id="KW-1133">Transmembrane helix</keyword>
<keyword id="KW-0813">Transport</keyword>
<reference key="1">
    <citation type="journal article" date="2006" name="BMC Genomics">
        <title>The genome of the square archaeon Haloquadratum walsbyi: life at the limits of water activity.</title>
        <authorList>
            <person name="Bolhuis H."/>
            <person name="Palm P."/>
            <person name="Wende A."/>
            <person name="Falb M."/>
            <person name="Rampp M."/>
            <person name="Rodriguez-Valera F."/>
            <person name="Pfeiffer F."/>
            <person name="Oesterhelt D."/>
        </authorList>
    </citation>
    <scope>NUCLEOTIDE SEQUENCE [LARGE SCALE GENOMIC DNA]</scope>
    <source>
        <strain>DSM 16790 / HBSQ001</strain>
    </source>
</reference>
<accession>Q18EC4</accession>
<dbReference type="EMBL" id="AM180088">
    <property type="protein sequence ID" value="CAJ53709.1"/>
    <property type="molecule type" value="Genomic_DNA"/>
</dbReference>
<dbReference type="RefSeq" id="WP_011572791.1">
    <property type="nucleotide sequence ID" value="NC_008212.1"/>
</dbReference>
<dbReference type="SMR" id="Q18EC4"/>
<dbReference type="STRING" id="362976.HQ_3621A"/>
<dbReference type="GeneID" id="4193801"/>
<dbReference type="KEGG" id="hwa:HQ_3621A"/>
<dbReference type="eggNOG" id="arCOG02248">
    <property type="taxonomic scope" value="Archaea"/>
</dbReference>
<dbReference type="HOGENOM" id="CLU_052508_2_1_2"/>
<dbReference type="Proteomes" id="UP000001975">
    <property type="component" value="Chromosome"/>
</dbReference>
<dbReference type="GO" id="GO:0005886">
    <property type="term" value="C:plasma membrane"/>
    <property type="evidence" value="ECO:0007669"/>
    <property type="project" value="UniProtKB-SubCell"/>
</dbReference>
<dbReference type="GO" id="GO:0000041">
    <property type="term" value="P:transition metal ion transport"/>
    <property type="evidence" value="ECO:0007669"/>
    <property type="project" value="InterPro"/>
</dbReference>
<dbReference type="Gene3D" id="1.10.1760.20">
    <property type="match status" value="1"/>
</dbReference>
<dbReference type="InterPro" id="IPR002751">
    <property type="entry name" value="CbiM/NikMN"/>
</dbReference>
<dbReference type="PANTHER" id="PTHR34229">
    <property type="entry name" value="METAL TRANSPORT PROTEIN HI_1621-RELATED"/>
    <property type="match status" value="1"/>
</dbReference>
<dbReference type="PANTHER" id="PTHR34229:SF1">
    <property type="entry name" value="METAL TRANSPORT PROTEIN HI_1621-RELATED"/>
    <property type="match status" value="1"/>
</dbReference>
<dbReference type="Pfam" id="PF01891">
    <property type="entry name" value="CbiM"/>
    <property type="match status" value="1"/>
</dbReference>
<gene>
    <name type="primary">cbiM</name>
    <name type="ordered locus">HQ_3621A</name>
</gene>
<feature type="chain" id="PRO_0000412173" description="Putative metal transport protein HQ_3621A">
    <location>
        <begin position="1"/>
        <end position="218"/>
    </location>
</feature>
<feature type="transmembrane region" description="Helical" evidence="1">
    <location>
        <begin position="7"/>
        <end position="27"/>
    </location>
</feature>
<feature type="transmembrane region" description="Helical" evidence="1">
    <location>
        <begin position="42"/>
        <end position="62"/>
    </location>
</feature>
<feature type="transmembrane region" description="Helical" evidence="1">
    <location>
        <begin position="73"/>
        <end position="93"/>
    </location>
</feature>
<feature type="transmembrane region" description="Helical" evidence="1">
    <location>
        <begin position="101"/>
        <end position="121"/>
    </location>
</feature>
<feature type="transmembrane region" description="Helical" evidence="1">
    <location>
        <begin position="138"/>
        <end position="158"/>
    </location>
</feature>
<feature type="transmembrane region" description="Helical" evidence="1">
    <location>
        <begin position="178"/>
        <end position="198"/>
    </location>
</feature>
<evidence type="ECO:0000255" key="1"/>
<evidence type="ECO:0000305" key="2"/>
<protein>
    <recommendedName>
        <fullName>Putative metal transport protein HQ_3621A</fullName>
    </recommendedName>
</protein>
<proteinExistence type="inferred from homology"/>